<sequence>MLRNGNEGMSTIPGFSQIQFEGFCRFINQGLAEELEKFPTIKDPDHEISFQLFAKGYQLLEPSIKERDAVYESLTYSSELYVSARLIFGFDVQKQTISIGNIPIMNSLGTFIINGIYRIVINQILLSPGIYYRSELDHKGISIYTGTIISDWGGRSELAIDKKERIWARVSRKQKISILVLSSAMGSNLKEILDNVSYPEIFLSFPNAKEKKRIESKEKAILEFYQQFACVGGDLVFSESLCEELQKKFFQQKCELGRIGRRNMNRRLNLDIPQNSTFLLPRDVLAATDHLIGMKFETGILDDDDMNHLKNKRIRSVADLLQDQFGLALGRLQHAVQKTIRRVFIRQSKPTPQTLVTPTSTSILLITTYETFFGTYPLSQVFDQTNPLTQTVHGRKVSCLGPGGLTGRTASFRSRDIHPSHYGRICPIDTSEGINVGLTGSLAIHARIDHWWGSVESPFYEISEKAKKKKERQVVYLSPNRDEYYMIAAGNSLSLNRGIQEEQVVPARYRQEFLTIAWEQIHVRSIFPFQYFSIGGSLIPFIEHNDANRALMSSNMQRQAVPLSRSEKCIVGTGLERQTALDSRVSVIAEREGKIISTNSHKILLSSSGKTISIPLVTHRRSNKNTCMHQKPRVPRGKSIKKGQILAEGAATVGGELALGKNVLVAYMPWEGYNFEDAVLISERLVYEDIYTSFHIRKYEIQTDTTSQGSAEKITKEIPHLEEHLLRNLDRNGVVKLGSWVETGDILVGKLTPQIASESSYIAEAGLLRAIFGLEVSTSKETSLKLPIGGRGRVIDVKWIQRDPLDIMVRVYILQKREIKVGDKVAGRHGNKGIISKILPRQDMPYLQDGTPVDMVFNPLGVPSRMNVGQIFESSLGLAGDLLKKHYRIAPFDERYEQEASRKLVFSELYEASKQTKNPWVFEPEYPGKSRIFDGRTGDPFEQPVLIGKSYILKLIHQVDEKIHGRSTGPYSLVTQQPVRGRAKQGGQRIGEMEVWALEGFGVAHILQEILTYKSDHLIARQEILNATIWGKRVPNHEDPPESFRVLVRELRSLALELNHFLVSQKNFQVNREEV</sequence>
<gene>
    <name evidence="1" type="primary">rpoB</name>
    <name type="ORF">PA036</name>
</gene>
<protein>
    <recommendedName>
        <fullName evidence="1">DNA-directed RNA polymerase subunit beta</fullName>
        <ecNumber evidence="1">2.7.7.6</ecNumber>
    </recommendedName>
    <alternativeName>
        <fullName evidence="1">PEP</fullName>
    </alternativeName>
    <alternativeName>
        <fullName evidence="1">Plastid-encoded RNA polymerase subunit beta</fullName>
        <shortName evidence="1">RNA polymerase subunit beta</shortName>
    </alternativeName>
</protein>
<dbReference type="EC" id="2.7.7.6" evidence="1"/>
<dbReference type="EMBL" id="AY522331">
    <property type="protein sequence ID" value="AAS46174.1"/>
    <property type="status" value="ALT_INIT"/>
    <property type="molecule type" value="Genomic_DNA"/>
</dbReference>
<dbReference type="RefSeq" id="YP_009305294.1">
    <property type="nucleotide sequence ID" value="NC_031333.1"/>
</dbReference>
<dbReference type="SMR" id="P0C501"/>
<dbReference type="GeneID" id="29141351"/>
<dbReference type="ExpressionAtlas" id="P0C501">
    <property type="expression patterns" value="baseline and differential"/>
</dbReference>
<dbReference type="GO" id="GO:0009507">
    <property type="term" value="C:chloroplast"/>
    <property type="evidence" value="ECO:0007669"/>
    <property type="project" value="UniProtKB-SubCell"/>
</dbReference>
<dbReference type="GO" id="GO:0000428">
    <property type="term" value="C:DNA-directed RNA polymerase complex"/>
    <property type="evidence" value="ECO:0007669"/>
    <property type="project" value="UniProtKB-KW"/>
</dbReference>
<dbReference type="GO" id="GO:0005739">
    <property type="term" value="C:mitochondrion"/>
    <property type="evidence" value="ECO:0007669"/>
    <property type="project" value="GOC"/>
</dbReference>
<dbReference type="GO" id="GO:0009536">
    <property type="term" value="C:plastid"/>
    <property type="evidence" value="ECO:0000305"/>
    <property type="project" value="Gramene"/>
</dbReference>
<dbReference type="GO" id="GO:0003677">
    <property type="term" value="F:DNA binding"/>
    <property type="evidence" value="ECO:0007669"/>
    <property type="project" value="UniProtKB-UniRule"/>
</dbReference>
<dbReference type="GO" id="GO:0003899">
    <property type="term" value="F:DNA-directed RNA polymerase activity"/>
    <property type="evidence" value="ECO:0007669"/>
    <property type="project" value="UniProtKB-UniRule"/>
</dbReference>
<dbReference type="GO" id="GO:0032549">
    <property type="term" value="F:ribonucleoside binding"/>
    <property type="evidence" value="ECO:0007669"/>
    <property type="project" value="InterPro"/>
</dbReference>
<dbReference type="GO" id="GO:0006351">
    <property type="term" value="P:DNA-templated transcription"/>
    <property type="evidence" value="ECO:0007669"/>
    <property type="project" value="UniProtKB-UniRule"/>
</dbReference>
<dbReference type="CDD" id="cd00653">
    <property type="entry name" value="RNA_pol_B_RPB2"/>
    <property type="match status" value="1"/>
</dbReference>
<dbReference type="Gene3D" id="2.40.50.100">
    <property type="match status" value="1"/>
</dbReference>
<dbReference type="Gene3D" id="2.40.50.150">
    <property type="match status" value="1"/>
</dbReference>
<dbReference type="Gene3D" id="3.90.1100.10">
    <property type="match status" value="1"/>
</dbReference>
<dbReference type="Gene3D" id="2.30.150.10">
    <property type="entry name" value="DNA-directed RNA polymerase, beta subunit, external 1 domain"/>
    <property type="match status" value="1"/>
</dbReference>
<dbReference type="Gene3D" id="2.40.270.10">
    <property type="entry name" value="DNA-directed RNA polymerase, subunit 2, domain 6"/>
    <property type="match status" value="2"/>
</dbReference>
<dbReference type="Gene3D" id="3.90.1800.10">
    <property type="entry name" value="RNA polymerase alpha subunit dimerisation domain"/>
    <property type="match status" value="1"/>
</dbReference>
<dbReference type="Gene3D" id="3.90.1110.10">
    <property type="entry name" value="RNA polymerase Rpb2, domain 2"/>
    <property type="match status" value="1"/>
</dbReference>
<dbReference type="HAMAP" id="MF_01321">
    <property type="entry name" value="RNApol_bact_RpoB"/>
    <property type="match status" value="1"/>
</dbReference>
<dbReference type="InterPro" id="IPR042107">
    <property type="entry name" value="DNA-dir_RNA_pol_bsu_ext_1_sf"/>
</dbReference>
<dbReference type="InterPro" id="IPR015712">
    <property type="entry name" value="DNA-dir_RNA_pol_su2"/>
</dbReference>
<dbReference type="InterPro" id="IPR007120">
    <property type="entry name" value="DNA-dir_RNAP_su2_dom"/>
</dbReference>
<dbReference type="InterPro" id="IPR037033">
    <property type="entry name" value="DNA-dir_RNAP_su2_hyb_sf"/>
</dbReference>
<dbReference type="InterPro" id="IPR010243">
    <property type="entry name" value="RNA_pol_bsu_bac"/>
</dbReference>
<dbReference type="InterPro" id="IPR007121">
    <property type="entry name" value="RNA_pol_bsu_CS"/>
</dbReference>
<dbReference type="InterPro" id="IPR007642">
    <property type="entry name" value="RNA_pol_Rpb2_2"/>
</dbReference>
<dbReference type="InterPro" id="IPR037034">
    <property type="entry name" value="RNA_pol_Rpb2_2_sf"/>
</dbReference>
<dbReference type="InterPro" id="IPR007645">
    <property type="entry name" value="RNA_pol_Rpb2_3"/>
</dbReference>
<dbReference type="InterPro" id="IPR007641">
    <property type="entry name" value="RNA_pol_Rpb2_7"/>
</dbReference>
<dbReference type="InterPro" id="IPR014724">
    <property type="entry name" value="RNA_pol_RPB2_OB-fold"/>
</dbReference>
<dbReference type="NCBIfam" id="NF001616">
    <property type="entry name" value="PRK00405.1"/>
    <property type="match status" value="1"/>
</dbReference>
<dbReference type="PANTHER" id="PTHR20856">
    <property type="entry name" value="DNA-DIRECTED RNA POLYMERASE I SUBUNIT 2"/>
    <property type="match status" value="1"/>
</dbReference>
<dbReference type="Pfam" id="PF04561">
    <property type="entry name" value="RNA_pol_Rpb2_2"/>
    <property type="match status" value="1"/>
</dbReference>
<dbReference type="Pfam" id="PF04565">
    <property type="entry name" value="RNA_pol_Rpb2_3"/>
    <property type="match status" value="1"/>
</dbReference>
<dbReference type="Pfam" id="PF00562">
    <property type="entry name" value="RNA_pol_Rpb2_6"/>
    <property type="match status" value="1"/>
</dbReference>
<dbReference type="Pfam" id="PF04560">
    <property type="entry name" value="RNA_pol_Rpb2_7"/>
    <property type="match status" value="1"/>
</dbReference>
<dbReference type="SUPFAM" id="SSF64484">
    <property type="entry name" value="beta and beta-prime subunits of DNA dependent RNA-polymerase"/>
    <property type="match status" value="1"/>
</dbReference>
<dbReference type="PROSITE" id="PS01166">
    <property type="entry name" value="RNA_POL_BETA"/>
    <property type="match status" value="1"/>
</dbReference>
<name>RPOB_ORYSA</name>
<geneLocation type="chloroplast"/>
<organism>
    <name type="scientific">Oryza sativa</name>
    <name type="common">Rice</name>
    <dbReference type="NCBI Taxonomy" id="4530"/>
    <lineage>
        <taxon>Eukaryota</taxon>
        <taxon>Viridiplantae</taxon>
        <taxon>Streptophyta</taxon>
        <taxon>Embryophyta</taxon>
        <taxon>Tracheophyta</taxon>
        <taxon>Spermatophyta</taxon>
        <taxon>Magnoliopsida</taxon>
        <taxon>Liliopsida</taxon>
        <taxon>Poales</taxon>
        <taxon>Poaceae</taxon>
        <taxon>BOP clade</taxon>
        <taxon>Oryzoideae</taxon>
        <taxon>Oryzeae</taxon>
        <taxon>Oryzinae</taxon>
        <taxon>Oryza</taxon>
    </lineage>
</organism>
<accession>P0C501</accession>
<accession>P12091</accession>
<accession>Q6QXV7</accession>
<accession>Q6QY83</accession>
<feature type="chain" id="PRO_0000048037" description="DNA-directed RNA polymerase subunit beta">
    <location>
        <begin position="1"/>
        <end position="1075"/>
    </location>
</feature>
<keyword id="KW-0150">Chloroplast</keyword>
<keyword id="KW-0240">DNA-directed RNA polymerase</keyword>
<keyword id="KW-0548">Nucleotidyltransferase</keyword>
<keyword id="KW-0934">Plastid</keyword>
<keyword id="KW-0804">Transcription</keyword>
<keyword id="KW-0808">Transferase</keyword>
<proteinExistence type="inferred from homology"/>
<comment type="function">
    <text evidence="1">DNA-dependent RNA polymerase catalyzes the transcription of DNA into RNA using the four ribonucleoside triphosphates as substrates.</text>
</comment>
<comment type="catalytic activity">
    <reaction evidence="1">
        <text>RNA(n) + a ribonucleoside 5'-triphosphate = RNA(n+1) + diphosphate</text>
        <dbReference type="Rhea" id="RHEA:21248"/>
        <dbReference type="Rhea" id="RHEA-COMP:14527"/>
        <dbReference type="Rhea" id="RHEA-COMP:17342"/>
        <dbReference type="ChEBI" id="CHEBI:33019"/>
        <dbReference type="ChEBI" id="CHEBI:61557"/>
        <dbReference type="ChEBI" id="CHEBI:140395"/>
        <dbReference type="EC" id="2.7.7.6"/>
    </reaction>
</comment>
<comment type="subunit">
    <text evidence="1">In plastids the minimal PEP RNA polymerase catalytic core is composed of four subunits: alpha, beta, beta', and beta''. When a (nuclear-encoded) sigma factor is associated with the core the holoenzyme is formed, which can initiate transcription.</text>
</comment>
<comment type="subcellular location">
    <subcellularLocation>
        <location>Plastid</location>
        <location>Chloroplast</location>
    </subcellularLocation>
</comment>
<comment type="similarity">
    <text evidence="1">Belongs to the RNA polymerase beta chain family.</text>
</comment>
<comment type="sequence caution" evidence="2">
    <conflict type="erroneous initiation">
        <sequence resource="EMBL-CDS" id="AAS46174"/>
    </conflict>
</comment>
<reference key="1">
    <citation type="journal article" date="2004" name="Plant Physiol.">
        <title>A comparison of rice chloroplast genomes.</title>
        <authorList>
            <person name="Tang J."/>
            <person name="Xia H."/>
            <person name="Cao M."/>
            <person name="Zhang X."/>
            <person name="Zeng W."/>
            <person name="Hu S."/>
            <person name="Tong W."/>
            <person name="Wang J."/>
            <person name="Wang J."/>
            <person name="Yu J."/>
            <person name="Yang H."/>
            <person name="Zhu L."/>
        </authorList>
    </citation>
    <scope>NUCLEOTIDE SEQUENCE [LARGE SCALE GENOMIC DNA]</scope>
    <source>
        <strain>cv. PA64s</strain>
    </source>
</reference>
<evidence type="ECO:0000255" key="1">
    <source>
        <dbReference type="HAMAP-Rule" id="MF_01321"/>
    </source>
</evidence>
<evidence type="ECO:0000305" key="2"/>